<keyword id="KW-0084">Basement membrane</keyword>
<keyword id="KW-0106">Calcium</keyword>
<keyword id="KW-0156">Chromatin regulator</keyword>
<keyword id="KW-0158">Chromosome</keyword>
<keyword id="KW-0186">Copper</keyword>
<keyword id="KW-1015">Disulfide bond</keyword>
<keyword id="KW-0256">Endoplasmic reticulum</keyword>
<keyword id="KW-0272">Extracellular matrix</keyword>
<keyword id="KW-0325">Glycoprotein</keyword>
<keyword id="KW-0886">LTQ</keyword>
<keyword id="KW-0479">Metal-binding</keyword>
<keyword id="KW-0539">Nucleus</keyword>
<keyword id="KW-0560">Oxidoreductase</keyword>
<keyword id="KW-1185">Reference proteome</keyword>
<keyword id="KW-0677">Repeat</keyword>
<keyword id="KW-0678">Repressor</keyword>
<keyword id="KW-0964">Secreted</keyword>
<keyword id="KW-0732">Signal</keyword>
<keyword id="KW-0801">TPQ</keyword>
<keyword id="KW-0804">Transcription</keyword>
<keyword id="KW-0805">Transcription regulation</keyword>
<sequence length="776" mass="87185">MEIPFGSCLYSCLALLVLLPSLSLAQYESWPYQLQYPEYFQQPPPEHHQHQVPSDVVKIQVRLAGQKRKHNEGRVEVYYEGQWGTVCDDDFSIHAAHVVCREVGYVEAKSWTASSSYGPGEGPIWLDNIYCTGKESTLAACSSNGWGVTDCKHPEDVGVVCSEKRIPGFKFDNSLINQIESLNIQVEDIRIRPILSAFRHRKPVTEGYVEVKEGKAWKQICDKHWTAKNSHVVCGMFGFPAEKTYNPKAYKTFASRRKLRYWKFSMNCTGTEAHISSCKLGPPMFRDPVKNATCENGQPAVVSCVPSQIFSPDGPSRFRKAYKPEQPLVRLRGGAQVGEGRVEVLKNGEWGTVCDDKWDLVSASVVCRELGFGTAKEAVTGSRLGQGIGPIHLNEVQCTGTEKSIIDCKLNTESQGCNHEEDAGVRCNIPIMGFQKKVRLNGGRNPYEGRVEVLTERNGSLVWGNVCGQNWGIVEAMVVCRQLGLGFASNAFQETWYWHGNIFANKVIMSGVKCSGTELSLAHCRHDEEVVCPEGGVQYGAGVACSETAPDLVLNAEIVQQTAYLEDRPMALLQCAMEENCLSASAVHTDPTRGHRRLLRFSSQIHNNGQSDFRPKNGRHAWIWHDCHRHYHSMEVFTYYDLLSLNGTKVAEGHKASFCLEDTECEGDIQKSYECANFGEQGITMGCWDMYRHDIDCQWIDITDVPPGDYLFQVVINPNYEVPESDFSNNIMKCRSRYDGYRIWMYNCHVGGAFSEETEQKFEHFSGLLNNQLSVQ</sequence>
<evidence type="ECO:0000250" key="1"/>
<evidence type="ECO:0000250" key="2">
    <source>
        <dbReference type="UniProtKB" id="P33072"/>
    </source>
</evidence>
<evidence type="ECO:0000250" key="3">
    <source>
        <dbReference type="UniProtKB" id="P58022"/>
    </source>
</evidence>
<evidence type="ECO:0000250" key="4">
    <source>
        <dbReference type="UniProtKB" id="Q9Y4K0"/>
    </source>
</evidence>
<evidence type="ECO:0000255" key="5"/>
<evidence type="ECO:0000255" key="6">
    <source>
        <dbReference type="PROSITE-ProRule" id="PRU00196"/>
    </source>
</evidence>
<evidence type="ECO:0000269" key="7">
    <source>
    </source>
</evidence>
<evidence type="ECO:0000305" key="8"/>
<accession>B5DF27</accession>
<accession>F1LPM2</accession>
<dbReference type="EC" id="1.4.3.13" evidence="4"/>
<dbReference type="EMBL" id="BC168900">
    <property type="protein sequence ID" value="AAI68900.1"/>
    <property type="molecule type" value="mRNA"/>
</dbReference>
<dbReference type="RefSeq" id="NP_001099517.2">
    <property type="nucleotide sequence ID" value="NM_001106047.2"/>
</dbReference>
<dbReference type="SMR" id="B5DF27"/>
<dbReference type="FunCoup" id="B5DF27">
    <property type="interactions" value="83"/>
</dbReference>
<dbReference type="STRING" id="10116.ENSRNOP00000073118"/>
<dbReference type="BindingDB" id="B5DF27"/>
<dbReference type="ChEMBL" id="CHEMBL4105908"/>
<dbReference type="GlyCosmos" id="B5DF27">
    <property type="glycosylation" value="4 sites, No reported glycans"/>
</dbReference>
<dbReference type="GlyGen" id="B5DF27">
    <property type="glycosylation" value="4 sites"/>
</dbReference>
<dbReference type="PhosphoSitePlus" id="B5DF27"/>
<dbReference type="PaxDb" id="10116-ENSRNOP00000055457"/>
<dbReference type="PeptideAtlas" id="B5DF27"/>
<dbReference type="GeneID" id="290350"/>
<dbReference type="KEGG" id="rno:290350"/>
<dbReference type="UCSC" id="RGD:1308435">
    <property type="organism name" value="rat"/>
</dbReference>
<dbReference type="AGR" id="RGD:1308435"/>
<dbReference type="CTD" id="4017"/>
<dbReference type="RGD" id="1308435">
    <property type="gene designation" value="Loxl2"/>
</dbReference>
<dbReference type="eggNOG" id="ENOG502QSX8">
    <property type="taxonomic scope" value="Eukaryota"/>
</dbReference>
<dbReference type="InParanoid" id="B5DF27"/>
<dbReference type="OrthoDB" id="547291at2759"/>
<dbReference type="Reactome" id="R-RNO-1566948">
    <property type="pathway name" value="Elastic fibre formation"/>
</dbReference>
<dbReference type="Reactome" id="R-RNO-2243919">
    <property type="pathway name" value="Crosslinking of collagen fibrils"/>
</dbReference>
<dbReference type="PRO" id="PR:B5DF27"/>
<dbReference type="Proteomes" id="UP000002494">
    <property type="component" value="Unplaced"/>
</dbReference>
<dbReference type="GO" id="GO:0005604">
    <property type="term" value="C:basement membrane"/>
    <property type="evidence" value="ECO:0000314"/>
    <property type="project" value="UniProtKB"/>
</dbReference>
<dbReference type="GO" id="GO:0000785">
    <property type="term" value="C:chromatin"/>
    <property type="evidence" value="ECO:0000250"/>
    <property type="project" value="UniProtKB"/>
</dbReference>
<dbReference type="GO" id="GO:0062023">
    <property type="term" value="C:collagen-containing extracellular matrix"/>
    <property type="evidence" value="ECO:0000318"/>
    <property type="project" value="GO_Central"/>
</dbReference>
<dbReference type="GO" id="GO:0005783">
    <property type="term" value="C:endoplasmic reticulum"/>
    <property type="evidence" value="ECO:0000250"/>
    <property type="project" value="UniProtKB"/>
</dbReference>
<dbReference type="GO" id="GO:0005615">
    <property type="term" value="C:extracellular space"/>
    <property type="evidence" value="ECO:0000250"/>
    <property type="project" value="UniProtKB"/>
</dbReference>
<dbReference type="GO" id="GO:0016020">
    <property type="term" value="C:membrane"/>
    <property type="evidence" value="ECO:0007669"/>
    <property type="project" value="InterPro"/>
</dbReference>
<dbReference type="GO" id="GO:0005634">
    <property type="term" value="C:nucleus"/>
    <property type="evidence" value="ECO:0000250"/>
    <property type="project" value="UniProtKB"/>
</dbReference>
<dbReference type="GO" id="GO:0005509">
    <property type="term" value="F:calcium ion binding"/>
    <property type="evidence" value="ECO:0000250"/>
    <property type="project" value="UniProtKB"/>
</dbReference>
<dbReference type="GO" id="GO:0005507">
    <property type="term" value="F:copper ion binding"/>
    <property type="evidence" value="ECO:0000250"/>
    <property type="project" value="UniProtKB"/>
</dbReference>
<dbReference type="GO" id="GO:0070492">
    <property type="term" value="F:oligosaccharide binding"/>
    <property type="evidence" value="ECO:0000250"/>
    <property type="project" value="UniProtKB"/>
</dbReference>
<dbReference type="GO" id="GO:0004720">
    <property type="term" value="F:protein-lysine 6-oxidase activity"/>
    <property type="evidence" value="ECO:0000250"/>
    <property type="project" value="UniProtKB"/>
</dbReference>
<dbReference type="GO" id="GO:0030199">
    <property type="term" value="P:collagen fibril organization"/>
    <property type="evidence" value="ECO:0000250"/>
    <property type="project" value="UniProtKB"/>
</dbReference>
<dbReference type="GO" id="GO:0043542">
    <property type="term" value="P:endothelial cell migration"/>
    <property type="evidence" value="ECO:0000250"/>
    <property type="project" value="UniProtKB"/>
</dbReference>
<dbReference type="GO" id="GO:0001935">
    <property type="term" value="P:endothelial cell proliferation"/>
    <property type="evidence" value="ECO:0000250"/>
    <property type="project" value="UniProtKB"/>
</dbReference>
<dbReference type="GO" id="GO:0001837">
    <property type="term" value="P:epithelial to mesenchymal transition"/>
    <property type="evidence" value="ECO:0000250"/>
    <property type="project" value="UniProtKB"/>
</dbReference>
<dbReference type="GO" id="GO:0070828">
    <property type="term" value="P:heterochromatin organization"/>
    <property type="evidence" value="ECO:0000250"/>
    <property type="project" value="UniProtKB"/>
</dbReference>
<dbReference type="GO" id="GO:0045892">
    <property type="term" value="P:negative regulation of DNA-templated transcription"/>
    <property type="evidence" value="ECO:0000250"/>
    <property type="project" value="UniProtKB"/>
</dbReference>
<dbReference type="GO" id="GO:1902455">
    <property type="term" value="P:negative regulation of stem cell population maintenance"/>
    <property type="evidence" value="ECO:0000250"/>
    <property type="project" value="UniProtKB"/>
</dbReference>
<dbReference type="GO" id="GO:0000122">
    <property type="term" value="P:negative regulation of transcription by RNA polymerase II"/>
    <property type="evidence" value="ECO:0000250"/>
    <property type="project" value="UniProtKB"/>
</dbReference>
<dbReference type="GO" id="GO:0018057">
    <property type="term" value="P:peptidyl-lysine oxidation"/>
    <property type="evidence" value="ECO:0000250"/>
    <property type="project" value="UniProtKB"/>
</dbReference>
<dbReference type="GO" id="GO:0032332">
    <property type="term" value="P:positive regulation of chondrocyte differentiation"/>
    <property type="evidence" value="ECO:0000250"/>
    <property type="project" value="UniProtKB"/>
</dbReference>
<dbReference type="GO" id="GO:0010718">
    <property type="term" value="P:positive regulation of epithelial to mesenchymal transition"/>
    <property type="evidence" value="ECO:0000250"/>
    <property type="project" value="UniProtKB"/>
</dbReference>
<dbReference type="GO" id="GO:0036211">
    <property type="term" value="P:protein modification process"/>
    <property type="evidence" value="ECO:0000250"/>
    <property type="project" value="UniProtKB"/>
</dbReference>
<dbReference type="GO" id="GO:0046688">
    <property type="term" value="P:response to copper ion"/>
    <property type="evidence" value="ECO:0000250"/>
    <property type="project" value="UniProtKB"/>
</dbReference>
<dbReference type="GO" id="GO:0001666">
    <property type="term" value="P:response to hypoxia"/>
    <property type="evidence" value="ECO:0000250"/>
    <property type="project" value="UniProtKB"/>
</dbReference>
<dbReference type="GO" id="GO:0002040">
    <property type="term" value="P:sprouting angiogenesis"/>
    <property type="evidence" value="ECO:0000250"/>
    <property type="project" value="UniProtKB"/>
</dbReference>
<dbReference type="FunFam" id="3.10.250.10:FF:000001">
    <property type="entry name" value="Lysyl oxidase 4 isoform X1"/>
    <property type="match status" value="2"/>
</dbReference>
<dbReference type="FunFam" id="3.10.250.10:FF:000008">
    <property type="entry name" value="Lysyl oxidase homolog 2"/>
    <property type="match status" value="1"/>
</dbReference>
<dbReference type="FunFam" id="3.10.250.10:FF:000014">
    <property type="entry name" value="Lysyl oxidase homolog 2"/>
    <property type="match status" value="1"/>
</dbReference>
<dbReference type="Gene3D" id="3.10.250.10">
    <property type="entry name" value="SRCR-like domain"/>
    <property type="match status" value="4"/>
</dbReference>
<dbReference type="InterPro" id="IPR050912">
    <property type="entry name" value="LOX-like_protein"/>
</dbReference>
<dbReference type="InterPro" id="IPR001695">
    <property type="entry name" value="Lysyl_oxidase"/>
</dbReference>
<dbReference type="InterPro" id="IPR019828">
    <property type="entry name" value="Lysyl_oxidase_CS"/>
</dbReference>
<dbReference type="InterPro" id="IPR001190">
    <property type="entry name" value="SRCR"/>
</dbReference>
<dbReference type="InterPro" id="IPR036772">
    <property type="entry name" value="SRCR-like_dom_sf"/>
</dbReference>
<dbReference type="PANTHER" id="PTHR45817:SF1">
    <property type="entry name" value="LYSYL OXIDASE HOMOLOG 2"/>
    <property type="match status" value="1"/>
</dbReference>
<dbReference type="PANTHER" id="PTHR45817">
    <property type="entry name" value="LYSYL OXIDASE-LIKE-RELATED"/>
    <property type="match status" value="1"/>
</dbReference>
<dbReference type="Pfam" id="PF01186">
    <property type="entry name" value="Lysyl_oxidase"/>
    <property type="match status" value="1"/>
</dbReference>
<dbReference type="Pfam" id="PF00530">
    <property type="entry name" value="SRCR"/>
    <property type="match status" value="4"/>
</dbReference>
<dbReference type="PRINTS" id="PR00074">
    <property type="entry name" value="LYSYLOXIDASE"/>
</dbReference>
<dbReference type="PRINTS" id="PR00258">
    <property type="entry name" value="SPERACTRCPTR"/>
</dbReference>
<dbReference type="SMART" id="SM00202">
    <property type="entry name" value="SR"/>
    <property type="match status" value="4"/>
</dbReference>
<dbReference type="SUPFAM" id="SSF56487">
    <property type="entry name" value="SRCR-like"/>
    <property type="match status" value="4"/>
</dbReference>
<dbReference type="PROSITE" id="PS00926">
    <property type="entry name" value="LYSYL_OXIDASE"/>
    <property type="match status" value="1"/>
</dbReference>
<dbReference type="PROSITE" id="PS00420">
    <property type="entry name" value="SRCR_1"/>
    <property type="match status" value="2"/>
</dbReference>
<dbReference type="PROSITE" id="PS50287">
    <property type="entry name" value="SRCR_2"/>
    <property type="match status" value="4"/>
</dbReference>
<name>LOXL2_RAT</name>
<protein>
    <recommendedName>
        <fullName>Lysyl oxidase homolog 2</fullName>
        <ecNumber evidence="4">1.4.3.13</ecNumber>
    </recommendedName>
    <alternativeName>
        <fullName>Lysyl oxidase-like protein 2</fullName>
    </alternativeName>
</protein>
<feature type="signal peptide" evidence="5">
    <location>
        <begin position="1"/>
        <end position="25"/>
    </location>
</feature>
<feature type="chain" id="PRO_0000418002" description="Lysyl oxidase homolog 2">
    <location>
        <begin position="26"/>
        <end position="776"/>
    </location>
</feature>
<feature type="domain" description="SRCR 1" evidence="6">
    <location>
        <begin position="61"/>
        <end position="162"/>
    </location>
</feature>
<feature type="domain" description="SRCR 2" evidence="6">
    <location>
        <begin position="191"/>
        <end position="305"/>
    </location>
</feature>
<feature type="domain" description="SRCR 3" evidence="6">
    <location>
        <begin position="329"/>
        <end position="428"/>
    </location>
</feature>
<feature type="domain" description="SRCR 4" evidence="6">
    <location>
        <begin position="438"/>
        <end position="546"/>
    </location>
</feature>
<feature type="region of interest" description="Lysyl-oxidase like" evidence="1">
    <location>
        <begin position="550"/>
        <end position="753"/>
    </location>
</feature>
<feature type="binding site" evidence="4">
    <location>
        <position position="551"/>
    </location>
    <ligand>
        <name>Ca(2+)</name>
        <dbReference type="ChEBI" id="CHEBI:29108"/>
    </ligand>
</feature>
<feature type="binding site" evidence="4">
    <location>
        <position position="552"/>
    </location>
    <ligand>
        <name>Ca(2+)</name>
        <dbReference type="ChEBI" id="CHEBI:29108"/>
    </ligand>
</feature>
<feature type="binding site" evidence="4">
    <location>
        <position position="628"/>
    </location>
    <ligand>
        <name>Cu cation</name>
        <dbReference type="ChEBI" id="CHEBI:23378"/>
    </ligand>
</feature>
<feature type="binding site" evidence="4">
    <location>
        <position position="630"/>
    </location>
    <ligand>
        <name>Cu cation</name>
        <dbReference type="ChEBI" id="CHEBI:23378"/>
    </ligand>
</feature>
<feature type="binding site" evidence="4">
    <location>
        <position position="632"/>
    </location>
    <ligand>
        <name>Cu cation</name>
        <dbReference type="ChEBI" id="CHEBI:23378"/>
    </ligand>
</feature>
<feature type="binding site" evidence="4">
    <location>
        <position position="724"/>
    </location>
    <ligand>
        <name>Ca(2+)</name>
        <dbReference type="ChEBI" id="CHEBI:29108"/>
    </ligand>
</feature>
<feature type="binding site" evidence="4">
    <location>
        <position position="726"/>
    </location>
    <ligand>
        <name>Ca(2+)</name>
        <dbReference type="ChEBI" id="CHEBI:29108"/>
    </ligand>
</feature>
<feature type="binding site" evidence="4">
    <location>
        <position position="729"/>
    </location>
    <ligand>
        <name>Ca(2+)</name>
        <dbReference type="ChEBI" id="CHEBI:29108"/>
    </ligand>
</feature>
<feature type="binding site" evidence="4">
    <location>
        <position position="730"/>
    </location>
    <ligand>
        <name>Ca(2+)</name>
        <dbReference type="ChEBI" id="CHEBI:29108"/>
    </ligand>
</feature>
<feature type="modified residue" description="2',4',5'-topaquinone" evidence="2">
    <location>
        <position position="691"/>
    </location>
</feature>
<feature type="glycosylation site" description="N-linked (GlcNAc...) asparagine" evidence="5">
    <location>
        <position position="267"/>
    </location>
</feature>
<feature type="glycosylation site" description="N-linked (GlcNAc...) asparagine" evidence="5">
    <location>
        <position position="291"/>
    </location>
</feature>
<feature type="glycosylation site" description="N-linked (GlcNAc...) asparagine" evidence="5">
    <location>
        <position position="458"/>
    </location>
</feature>
<feature type="glycosylation site" description="N-linked (GlcNAc...) asparagine" evidence="5">
    <location>
        <position position="646"/>
    </location>
</feature>
<feature type="disulfide bond" evidence="6">
    <location>
        <begin position="87"/>
        <end position="151"/>
    </location>
</feature>
<feature type="disulfide bond" evidence="6">
    <location>
        <begin position="100"/>
        <end position="161"/>
    </location>
</feature>
<feature type="disulfide bond" evidence="6">
    <location>
        <begin position="131"/>
        <end position="141"/>
    </location>
</feature>
<feature type="disulfide bond" evidence="6">
    <location>
        <begin position="221"/>
        <end position="294"/>
    </location>
</feature>
<feature type="disulfide bond" evidence="6">
    <location>
        <begin position="234"/>
        <end position="304"/>
    </location>
</feature>
<feature type="disulfide bond" evidence="6">
    <location>
        <begin position="268"/>
        <end position="278"/>
    </location>
</feature>
<feature type="disulfide bond" evidence="6">
    <location>
        <begin position="354"/>
        <end position="417"/>
    </location>
</feature>
<feature type="disulfide bond" evidence="6">
    <location>
        <begin position="367"/>
        <end position="427"/>
    </location>
</feature>
<feature type="disulfide bond" evidence="6">
    <location>
        <begin position="398"/>
        <end position="408"/>
    </location>
</feature>
<feature type="disulfide bond" evidence="6">
    <location>
        <begin position="467"/>
        <end position="532"/>
    </location>
</feature>
<feature type="disulfide bond" evidence="6">
    <location>
        <begin position="480"/>
        <end position="545"/>
    </location>
</feature>
<feature type="disulfide bond" evidence="6">
    <location>
        <begin position="514"/>
        <end position="524"/>
    </location>
</feature>
<feature type="disulfide bond" evidence="4">
    <location>
        <begin position="575"/>
        <end position="627"/>
    </location>
</feature>
<feature type="disulfide bond" evidence="4">
    <location>
        <begin position="581"/>
        <end position="697"/>
    </location>
</feature>
<feature type="disulfide bond" evidence="4">
    <location>
        <begin position="659"/>
        <end position="675"/>
    </location>
</feature>
<feature type="disulfide bond" evidence="4">
    <location>
        <begin position="665"/>
        <end position="687"/>
    </location>
</feature>
<feature type="disulfide bond" evidence="6">
    <location>
        <begin position="734"/>
        <end position="748"/>
    </location>
</feature>
<feature type="cross-link" description="Lysine tyrosylquinone (Lys-Tyr)" evidence="2">
    <location>
        <begin position="655"/>
        <end position="691"/>
    </location>
</feature>
<feature type="sequence conflict" description="In Ref. 2; AAI68900." evidence="8" ref="2">
    <original>P</original>
    <variation>T</variation>
    <location>
        <position position="154"/>
    </location>
</feature>
<comment type="function">
    <text evidence="3 4">Mediates the post-translational oxidative deamination of lysine residues on target proteins leading to the formation of deaminated lysine (allysine). Acts as a transcription corepressor and specifically mediates deamination of trimethylated 'Lys-4' of histone H3 (H3K4me3), a specific tag for epigenetic transcriptional activation. Shows no activity against histone H3 when it is trimethylated on 'Lys-9' (H3K9me3) or 'Lys-27' (H3K27me3) or when 'Lys-4' is monomethylated (H3K4me1) or dimethylated (H3K4me2). Also mediates deamination of methylated TAF10, a member of the transcription factor IID (TFIID) complex, which induces release of TAF10 from promoters, leading to inhibition of TFIID-dependent transcription. LOXL2-mediated deamination of TAF10 results in transcriptional repression of genes required for embryonic stem cell pluripotency including POU5F1/OCT4, NANOG, KLF4 and SOX2. Involved in epithelial to mesenchymal transition (EMT) via interaction with SNAI1 and participates in repression of E-cadherin CDH1, probably by mediating deamination of histone H3. During EMT, involved with SNAI1 in negatively regulating pericentromeric heterochromatin transcription. SNAI1 recruits LOXL2 to pericentromeric regions to oxidize histone H3 and repress transcription which leads to release of heterochromatin component CBX5/HP1A, enabling chromatin reorganization and acquisition of mesenchymal traits. Interacts with the endoplasmic reticulum protein HSPA5 which activates the IRE1-XBP1 pathway of the unfolded protein response, leading to expression of several transcription factors involved in EMT and subsequent EMT induction. When secreted into the extracellular matrix, promotes cross-linking of extracellular matrix proteins by mediating oxidative deamination of peptidyl lysine residues in precursors to fibrous collagen and elastin. Acts as a regulator of sprouting angiogenesis, probably via collagen IV scaffolding. Acts as a regulator of chondrocyte differentiation, probably by regulating expression of factors that control chondrocyte differentiation.</text>
</comment>
<comment type="catalytic activity">
    <reaction evidence="4">
        <text>L-lysyl-[protein] + O2 + H2O = (S)-2-amino-6-oxohexanoyl-[protein] + H2O2 + NH4(+)</text>
        <dbReference type="Rhea" id="RHEA:24544"/>
        <dbReference type="Rhea" id="RHEA-COMP:9752"/>
        <dbReference type="Rhea" id="RHEA-COMP:12448"/>
        <dbReference type="ChEBI" id="CHEBI:15377"/>
        <dbReference type="ChEBI" id="CHEBI:15379"/>
        <dbReference type="ChEBI" id="CHEBI:16240"/>
        <dbReference type="ChEBI" id="CHEBI:28938"/>
        <dbReference type="ChEBI" id="CHEBI:29969"/>
        <dbReference type="ChEBI" id="CHEBI:131803"/>
        <dbReference type="EC" id="1.4.3.13"/>
    </reaction>
</comment>
<comment type="cofactor">
    <cofactor evidence="4">
        <name>Cu cation</name>
        <dbReference type="ChEBI" id="CHEBI:23378"/>
    </cofactor>
</comment>
<comment type="cofactor">
    <cofactor evidence="4">
        <name>lysine tyrosylquinone residue</name>
        <dbReference type="ChEBI" id="CHEBI:20489"/>
    </cofactor>
    <text evidence="2 4">Contains 1 lysine tyrosylquinone.</text>
</comment>
<comment type="activity regulation">
    <text evidence="4">Specifically inhibited by a mouse monoclonal antibody AB0023, inhibition occurs in a non-competitive manner.</text>
</comment>
<comment type="subunit">
    <text evidence="4">Component of some chromatin repressor complex. Interacts with SNAI1. Interacts with TAF10. Interacts with HSPA5. Interacts with EFEMP2 (By similarity).</text>
</comment>
<comment type="subcellular location">
    <subcellularLocation>
        <location evidence="7">Secreted</location>
        <location evidence="7">Extracellular space</location>
        <location evidence="7">Extracellular matrix</location>
        <location evidence="7">Basement membrane</location>
    </subcellularLocation>
    <subcellularLocation>
        <location evidence="4">Nucleus</location>
    </subcellularLocation>
    <subcellularLocation>
        <location evidence="4">Chromosome</location>
    </subcellularLocation>
    <subcellularLocation>
        <location evidence="4">Endoplasmic reticulum</location>
    </subcellularLocation>
    <text evidence="4">Associated with chromatin. It is unclear how LOXL2 is nuclear as it contains a signal sequence and has been shown to be secreted. However, a number of reports confirm its intracellular location and its key role in transcription regulation.</text>
</comment>
<comment type="domain">
    <text evidence="1">The fourth SRCR domain plays an important role in optimizing the catalytic activity of the lysyl-oxidase like (LOX) catalytic domain.</text>
</comment>
<comment type="PTM">
    <text evidence="4">The lysine tyrosylquinone cross-link (LTQ) is generated by condensation of the epsilon-amino group of a lysine with a topaquinone produced by oxidation of tyrosine.</text>
</comment>
<comment type="PTM">
    <text evidence="4">N-glycosylated. N-glycosylation on Asn-458 and Asn-646 may be essential for proper folding and secretion; may be composed of a fucosylated carbohydrates attached to a trimannose N-linked glycan core.</text>
</comment>
<comment type="similarity">
    <text evidence="8">Belongs to the lysyl oxidase family.</text>
</comment>
<proteinExistence type="evidence at transcript level"/>
<gene>
    <name type="primary">Loxl2</name>
</gene>
<organism>
    <name type="scientific">Rattus norvegicus</name>
    <name type="common">Rat</name>
    <dbReference type="NCBI Taxonomy" id="10116"/>
    <lineage>
        <taxon>Eukaryota</taxon>
        <taxon>Metazoa</taxon>
        <taxon>Chordata</taxon>
        <taxon>Craniata</taxon>
        <taxon>Vertebrata</taxon>
        <taxon>Euteleostomi</taxon>
        <taxon>Mammalia</taxon>
        <taxon>Eutheria</taxon>
        <taxon>Euarchontoglires</taxon>
        <taxon>Glires</taxon>
        <taxon>Rodentia</taxon>
        <taxon>Myomorpha</taxon>
        <taxon>Muroidea</taxon>
        <taxon>Muridae</taxon>
        <taxon>Murinae</taxon>
        <taxon>Rattus</taxon>
    </lineage>
</organism>
<reference key="1">
    <citation type="journal article" date="2004" name="Nature">
        <title>Genome sequence of the Brown Norway rat yields insights into mammalian evolution.</title>
        <authorList>
            <person name="Gibbs R.A."/>
            <person name="Weinstock G.M."/>
            <person name="Metzker M.L."/>
            <person name="Muzny D.M."/>
            <person name="Sodergren E.J."/>
            <person name="Scherer S."/>
            <person name="Scott G."/>
            <person name="Steffen D."/>
            <person name="Worley K.C."/>
            <person name="Burch P.E."/>
            <person name="Okwuonu G."/>
            <person name="Hines S."/>
            <person name="Lewis L."/>
            <person name="Deramo C."/>
            <person name="Delgado O."/>
            <person name="Dugan-Rocha S."/>
            <person name="Miner G."/>
            <person name="Morgan M."/>
            <person name="Hawes A."/>
            <person name="Gill R."/>
            <person name="Holt R.A."/>
            <person name="Adams M.D."/>
            <person name="Amanatides P.G."/>
            <person name="Baden-Tillson H."/>
            <person name="Barnstead M."/>
            <person name="Chin S."/>
            <person name="Evans C.A."/>
            <person name="Ferriera S."/>
            <person name="Fosler C."/>
            <person name="Glodek A."/>
            <person name="Gu Z."/>
            <person name="Jennings D."/>
            <person name="Kraft C.L."/>
            <person name="Nguyen T."/>
            <person name="Pfannkoch C.M."/>
            <person name="Sitter C."/>
            <person name="Sutton G.G."/>
            <person name="Venter J.C."/>
            <person name="Woodage T."/>
            <person name="Smith D."/>
            <person name="Lee H.-M."/>
            <person name="Gustafson E."/>
            <person name="Cahill P."/>
            <person name="Kana A."/>
            <person name="Doucette-Stamm L."/>
            <person name="Weinstock K."/>
            <person name="Fechtel K."/>
            <person name="Weiss R.B."/>
            <person name="Dunn D.M."/>
            <person name="Green E.D."/>
            <person name="Blakesley R.W."/>
            <person name="Bouffard G.G."/>
            <person name="De Jong P.J."/>
            <person name="Osoegawa K."/>
            <person name="Zhu B."/>
            <person name="Marra M."/>
            <person name="Schein J."/>
            <person name="Bosdet I."/>
            <person name="Fjell C."/>
            <person name="Jones S."/>
            <person name="Krzywinski M."/>
            <person name="Mathewson C."/>
            <person name="Siddiqui A."/>
            <person name="Wye N."/>
            <person name="McPherson J."/>
            <person name="Zhao S."/>
            <person name="Fraser C.M."/>
            <person name="Shetty J."/>
            <person name="Shatsman S."/>
            <person name="Geer K."/>
            <person name="Chen Y."/>
            <person name="Abramzon S."/>
            <person name="Nierman W.C."/>
            <person name="Havlak P.H."/>
            <person name="Chen R."/>
            <person name="Durbin K.J."/>
            <person name="Egan A."/>
            <person name="Ren Y."/>
            <person name="Song X.-Z."/>
            <person name="Li B."/>
            <person name="Liu Y."/>
            <person name="Qin X."/>
            <person name="Cawley S."/>
            <person name="Cooney A.J."/>
            <person name="D'Souza L.M."/>
            <person name="Martin K."/>
            <person name="Wu J.Q."/>
            <person name="Gonzalez-Garay M.L."/>
            <person name="Jackson A.R."/>
            <person name="Kalafus K.J."/>
            <person name="McLeod M.P."/>
            <person name="Milosavljevic A."/>
            <person name="Virk D."/>
            <person name="Volkov A."/>
            <person name="Wheeler D.A."/>
            <person name="Zhang Z."/>
            <person name="Bailey J.A."/>
            <person name="Eichler E.E."/>
            <person name="Tuzun E."/>
            <person name="Birney E."/>
            <person name="Mongin E."/>
            <person name="Ureta-Vidal A."/>
            <person name="Woodwark C."/>
            <person name="Zdobnov E."/>
            <person name="Bork P."/>
            <person name="Suyama M."/>
            <person name="Torrents D."/>
            <person name="Alexandersson M."/>
            <person name="Trask B.J."/>
            <person name="Young J.M."/>
            <person name="Huang H."/>
            <person name="Wang H."/>
            <person name="Xing H."/>
            <person name="Daniels S."/>
            <person name="Gietzen D."/>
            <person name="Schmidt J."/>
            <person name="Stevens K."/>
            <person name="Vitt U."/>
            <person name="Wingrove J."/>
            <person name="Camara F."/>
            <person name="Mar Alba M."/>
            <person name="Abril J.F."/>
            <person name="Guigo R."/>
            <person name="Smit A."/>
            <person name="Dubchak I."/>
            <person name="Rubin E.M."/>
            <person name="Couronne O."/>
            <person name="Poliakov A."/>
            <person name="Huebner N."/>
            <person name="Ganten D."/>
            <person name="Goesele C."/>
            <person name="Hummel O."/>
            <person name="Kreitler T."/>
            <person name="Lee Y.-A."/>
            <person name="Monti J."/>
            <person name="Schulz H."/>
            <person name="Zimdahl H."/>
            <person name="Himmelbauer H."/>
            <person name="Lehrach H."/>
            <person name="Jacob H.J."/>
            <person name="Bromberg S."/>
            <person name="Gullings-Handley J."/>
            <person name="Jensen-Seaman M.I."/>
            <person name="Kwitek A.E."/>
            <person name="Lazar J."/>
            <person name="Pasko D."/>
            <person name="Tonellato P.J."/>
            <person name="Twigger S."/>
            <person name="Ponting C.P."/>
            <person name="Duarte J.M."/>
            <person name="Rice S."/>
            <person name="Goodstadt L."/>
            <person name="Beatson S.A."/>
            <person name="Emes R.D."/>
            <person name="Winter E.E."/>
            <person name="Webber C."/>
            <person name="Brandt P."/>
            <person name="Nyakatura G."/>
            <person name="Adetobi M."/>
            <person name="Chiaromonte F."/>
            <person name="Elnitski L."/>
            <person name="Eswara P."/>
            <person name="Hardison R.C."/>
            <person name="Hou M."/>
            <person name="Kolbe D."/>
            <person name="Makova K."/>
            <person name="Miller W."/>
            <person name="Nekrutenko A."/>
            <person name="Riemer C."/>
            <person name="Schwartz S."/>
            <person name="Taylor J."/>
            <person name="Yang S."/>
            <person name="Zhang Y."/>
            <person name="Lindpaintner K."/>
            <person name="Andrews T.D."/>
            <person name="Caccamo M."/>
            <person name="Clamp M."/>
            <person name="Clarke L."/>
            <person name="Curwen V."/>
            <person name="Durbin R.M."/>
            <person name="Eyras E."/>
            <person name="Searle S.M."/>
            <person name="Cooper G.M."/>
            <person name="Batzoglou S."/>
            <person name="Brudno M."/>
            <person name="Sidow A."/>
            <person name="Stone E.A."/>
            <person name="Payseur B.A."/>
            <person name="Bourque G."/>
            <person name="Lopez-Otin C."/>
            <person name="Puente X.S."/>
            <person name="Chakrabarti K."/>
            <person name="Chatterji S."/>
            <person name="Dewey C."/>
            <person name="Pachter L."/>
            <person name="Bray N."/>
            <person name="Yap V.B."/>
            <person name="Caspi A."/>
            <person name="Tesler G."/>
            <person name="Pevzner P.A."/>
            <person name="Haussler D."/>
            <person name="Roskin K.M."/>
            <person name="Baertsch R."/>
            <person name="Clawson H."/>
            <person name="Furey T.S."/>
            <person name="Hinrichs A.S."/>
            <person name="Karolchik D."/>
            <person name="Kent W.J."/>
            <person name="Rosenbloom K.R."/>
            <person name="Trumbower H."/>
            <person name="Weirauch M."/>
            <person name="Cooper D.N."/>
            <person name="Stenson P.D."/>
            <person name="Ma B."/>
            <person name="Brent M."/>
            <person name="Arumugam M."/>
            <person name="Shteynberg D."/>
            <person name="Copley R.R."/>
            <person name="Taylor M.S."/>
            <person name="Riethman H."/>
            <person name="Mudunuri U."/>
            <person name="Peterson J."/>
            <person name="Guyer M."/>
            <person name="Felsenfeld A."/>
            <person name="Old S."/>
            <person name="Mockrin S."/>
            <person name="Collins F.S."/>
        </authorList>
    </citation>
    <scope>NUCLEOTIDE SEQUENCE [LARGE SCALE GENOMIC DNA]</scope>
    <source>
        <strain>Brown Norway</strain>
    </source>
</reference>
<reference key="2">
    <citation type="journal article" date="2004" name="Genome Res.">
        <title>The status, quality, and expansion of the NIH full-length cDNA project: the Mammalian Gene Collection (MGC).</title>
        <authorList>
            <consortium name="The MGC Project Team"/>
        </authorList>
    </citation>
    <scope>NUCLEOTIDE SEQUENCE [LARGE SCALE MRNA]</scope>
    <source>
        <tissue>Heart</tissue>
    </source>
</reference>
<reference key="3">
    <citation type="journal article" date="2011" name="Blood">
        <title>Lysyl oxidase-like protein-2 regulates sprouting angiogenesis and type IV collagen assembly in the endothelial basement membrane.</title>
        <authorList>
            <person name="Bignon M."/>
            <person name="Pichol-Thievend C."/>
            <person name="Hardouin J."/>
            <person name="Malbouyres M."/>
            <person name="Brechot N."/>
            <person name="Nasciutti L."/>
            <person name="Barret A."/>
            <person name="Teillon J."/>
            <person name="Guillon E."/>
            <person name="Etienne E."/>
            <person name="Caron M."/>
            <person name="Joubert-Caron R."/>
            <person name="Monnot C."/>
            <person name="Ruggiero F."/>
            <person name="Muller L."/>
            <person name="Germain S."/>
        </authorList>
    </citation>
    <scope>SUBCELLULAR LOCATION</scope>
</reference>